<proteinExistence type="inferred from homology"/>
<protein>
    <recommendedName>
        <fullName evidence="1">Pescadillo homolog</fullName>
    </recommendedName>
    <alternativeName>
        <fullName evidence="1">Nucleolar protein 7 homolog</fullName>
    </alternativeName>
</protein>
<evidence type="ECO:0000255" key="1">
    <source>
        <dbReference type="HAMAP-Rule" id="MF_03028"/>
    </source>
</evidence>
<evidence type="ECO:0000256" key="2">
    <source>
        <dbReference type="SAM" id="MobiDB-lite"/>
    </source>
</evidence>
<gene>
    <name evidence="1" type="primary">NOP7</name>
    <name type="ordered locus">DEHA2B01958g</name>
</gene>
<accession>Q6BXL7</accession>
<name>PESC_DEBHA</name>
<feature type="chain" id="PRO_0000370490" description="Pescadillo homolog">
    <location>
        <begin position="1"/>
        <end position="600"/>
    </location>
</feature>
<feature type="domain" description="BRCT" evidence="1">
    <location>
        <begin position="351"/>
        <end position="450"/>
    </location>
</feature>
<feature type="region of interest" description="Disordered" evidence="2">
    <location>
        <begin position="454"/>
        <end position="600"/>
    </location>
</feature>
<feature type="coiled-coil region" evidence="1">
    <location>
        <begin position="478"/>
        <end position="600"/>
    </location>
</feature>
<feature type="compositionally biased region" description="Acidic residues" evidence="2">
    <location>
        <begin position="478"/>
        <end position="509"/>
    </location>
</feature>
<feature type="compositionally biased region" description="Basic residues" evidence="2">
    <location>
        <begin position="530"/>
        <end position="539"/>
    </location>
</feature>
<feature type="compositionally biased region" description="Basic and acidic residues" evidence="2">
    <location>
        <begin position="569"/>
        <end position="580"/>
    </location>
</feature>
<feature type="compositionally biased region" description="Basic and acidic residues" evidence="2">
    <location>
        <begin position="588"/>
        <end position="600"/>
    </location>
</feature>
<sequence length="600" mass="68400">MRIKKKGTSGNAKNFITRTQAVKKLQVSLADFRRLCIFKGIYPREPRNKKKANKGSTAPVTFYYTKDIQYLLHEPVLGKFREHKTFAKKLQRALGRGEVSDAQKLEGNRPKYTLEHIIKERYPTFLDALRDIDDPLNMLFLFANMPATDKVSHRITKEAEKLTNQWLAYVAKERLIKKVFVSIKGVYYQANVKGQEVRWLVPFKFPTNIPTDVDFRIMLTFLEFYSTLLHFVLFRLYNDANLIYPPTIDTEKLKGIGGLSSYVLQSKDQGVKALLPNAKKAADSKDESKKVKETKLSKEEISKAVAADKSLNENAEDNVSENVEDVELDEFSSTNKTAGDLLSQPSKFASPTSTLLSKFIFYVGREVPLDILEFCILSCGGSIISEIALDELQLNQPEEYKKLDLSNITHQIVDRPTVASKVAGRTYVQPQWVFDCLNKSELLPVSQYAPGETLPPHLSPWGDAGGYNPDAEVKPTEQGEEEEEEEEEIEGDEIEEDVEEEDEEEDEDLQAQKELELEAAGVKSADAQKKDKKSSKGKKRSAEDEEKDLKKIMMSNKQRKLYKKMQYGIDKKEARQDDLTKKRRKLEKTKAELGKLNKKN</sequence>
<organism>
    <name type="scientific">Debaryomyces hansenii (strain ATCC 36239 / CBS 767 / BCRC 21394 / JCM 1990 / NBRC 0083 / IGC 2968)</name>
    <name type="common">Yeast</name>
    <name type="synonym">Torulaspora hansenii</name>
    <dbReference type="NCBI Taxonomy" id="284592"/>
    <lineage>
        <taxon>Eukaryota</taxon>
        <taxon>Fungi</taxon>
        <taxon>Dikarya</taxon>
        <taxon>Ascomycota</taxon>
        <taxon>Saccharomycotina</taxon>
        <taxon>Pichiomycetes</taxon>
        <taxon>Debaryomycetaceae</taxon>
        <taxon>Debaryomyces</taxon>
    </lineage>
</organism>
<keyword id="KW-0175">Coiled coil</keyword>
<keyword id="KW-0539">Nucleus</keyword>
<keyword id="KW-1185">Reference proteome</keyword>
<keyword id="KW-0690">Ribosome biogenesis</keyword>
<keyword id="KW-0698">rRNA processing</keyword>
<comment type="function">
    <text evidence="1">Component of the NOP7 complex, which is required for maturation of the 25S and 5.8S ribosomal RNAs and formation of the 60S ribosome.</text>
</comment>
<comment type="subunit">
    <text evidence="1">Component of the NOP7 complex, composed of ERB1, NOP7 and YTM1. The complex is held together by ERB1, which interacts with NOP7 via its N-terminal domain and with YTM1 via a high-affinity interaction between the seven-bladed beta-propeller domains of the 2 proteins. The NOP7 complex associates with the 66S pre-ribosome.</text>
</comment>
<comment type="subcellular location">
    <subcellularLocation>
        <location evidence="1">Nucleus</location>
        <location evidence="1">Nucleolus</location>
    </subcellularLocation>
    <subcellularLocation>
        <location evidence="1">Nucleus</location>
        <location evidence="1">Nucleoplasm</location>
    </subcellularLocation>
</comment>
<comment type="similarity">
    <text evidence="1">Belongs to the pescadillo family.</text>
</comment>
<reference key="1">
    <citation type="journal article" date="2004" name="Nature">
        <title>Genome evolution in yeasts.</title>
        <authorList>
            <person name="Dujon B."/>
            <person name="Sherman D."/>
            <person name="Fischer G."/>
            <person name="Durrens P."/>
            <person name="Casaregola S."/>
            <person name="Lafontaine I."/>
            <person name="de Montigny J."/>
            <person name="Marck C."/>
            <person name="Neuveglise C."/>
            <person name="Talla E."/>
            <person name="Goffard N."/>
            <person name="Frangeul L."/>
            <person name="Aigle M."/>
            <person name="Anthouard V."/>
            <person name="Babour A."/>
            <person name="Barbe V."/>
            <person name="Barnay S."/>
            <person name="Blanchin S."/>
            <person name="Beckerich J.-M."/>
            <person name="Beyne E."/>
            <person name="Bleykasten C."/>
            <person name="Boisrame A."/>
            <person name="Boyer J."/>
            <person name="Cattolico L."/>
            <person name="Confanioleri F."/>
            <person name="de Daruvar A."/>
            <person name="Despons L."/>
            <person name="Fabre E."/>
            <person name="Fairhead C."/>
            <person name="Ferry-Dumazet H."/>
            <person name="Groppi A."/>
            <person name="Hantraye F."/>
            <person name="Hennequin C."/>
            <person name="Jauniaux N."/>
            <person name="Joyet P."/>
            <person name="Kachouri R."/>
            <person name="Kerrest A."/>
            <person name="Koszul R."/>
            <person name="Lemaire M."/>
            <person name="Lesur I."/>
            <person name="Ma L."/>
            <person name="Muller H."/>
            <person name="Nicaud J.-M."/>
            <person name="Nikolski M."/>
            <person name="Oztas S."/>
            <person name="Ozier-Kalogeropoulos O."/>
            <person name="Pellenz S."/>
            <person name="Potier S."/>
            <person name="Richard G.-F."/>
            <person name="Straub M.-L."/>
            <person name="Suleau A."/>
            <person name="Swennen D."/>
            <person name="Tekaia F."/>
            <person name="Wesolowski-Louvel M."/>
            <person name="Westhof E."/>
            <person name="Wirth B."/>
            <person name="Zeniou-Meyer M."/>
            <person name="Zivanovic Y."/>
            <person name="Bolotin-Fukuhara M."/>
            <person name="Thierry A."/>
            <person name="Bouchier C."/>
            <person name="Caudron B."/>
            <person name="Scarpelli C."/>
            <person name="Gaillardin C."/>
            <person name="Weissenbach J."/>
            <person name="Wincker P."/>
            <person name="Souciet J.-L."/>
        </authorList>
    </citation>
    <scope>NUCLEOTIDE SEQUENCE [LARGE SCALE GENOMIC DNA]</scope>
    <source>
        <strain>ATCC 36239 / CBS 767 / BCRC 21394 / JCM 1990 / NBRC 0083 / IGC 2968</strain>
    </source>
</reference>
<dbReference type="EMBL" id="CR382134">
    <property type="protein sequence ID" value="CAG85038.1"/>
    <property type="molecule type" value="Genomic_DNA"/>
</dbReference>
<dbReference type="RefSeq" id="XP_457052.1">
    <property type="nucleotide sequence ID" value="XM_457052.1"/>
</dbReference>
<dbReference type="SMR" id="Q6BXL7"/>
<dbReference type="FunCoup" id="Q6BXL7">
    <property type="interactions" value="1413"/>
</dbReference>
<dbReference type="STRING" id="284592.Q6BXL7"/>
<dbReference type="GeneID" id="2913744"/>
<dbReference type="KEGG" id="dha:DEHA2B01958g"/>
<dbReference type="VEuPathDB" id="FungiDB:DEHA2B01958g"/>
<dbReference type="eggNOG" id="KOG2481">
    <property type="taxonomic scope" value="Eukaryota"/>
</dbReference>
<dbReference type="HOGENOM" id="CLU_019619_1_1_1"/>
<dbReference type="InParanoid" id="Q6BXL7"/>
<dbReference type="OMA" id="QKVTWIV"/>
<dbReference type="OrthoDB" id="10264910at2759"/>
<dbReference type="Proteomes" id="UP000000599">
    <property type="component" value="Chromosome B"/>
</dbReference>
<dbReference type="GO" id="GO:0005654">
    <property type="term" value="C:nucleoplasm"/>
    <property type="evidence" value="ECO:0007669"/>
    <property type="project" value="UniProtKB-SubCell"/>
</dbReference>
<dbReference type="GO" id="GO:0070545">
    <property type="term" value="C:PeBoW complex"/>
    <property type="evidence" value="ECO:0007669"/>
    <property type="project" value="EnsemblFungi"/>
</dbReference>
<dbReference type="GO" id="GO:0030687">
    <property type="term" value="C:preribosome, large subunit precursor"/>
    <property type="evidence" value="ECO:0007669"/>
    <property type="project" value="UniProtKB-UniRule"/>
</dbReference>
<dbReference type="GO" id="GO:0070180">
    <property type="term" value="F:large ribosomal subunit rRNA binding"/>
    <property type="evidence" value="ECO:0007669"/>
    <property type="project" value="EnsemblFungi"/>
</dbReference>
<dbReference type="GO" id="GO:0043021">
    <property type="term" value="F:ribonucleoprotein complex binding"/>
    <property type="evidence" value="ECO:0007669"/>
    <property type="project" value="UniProtKB-UniRule"/>
</dbReference>
<dbReference type="GO" id="GO:0000466">
    <property type="term" value="P:maturation of 5.8S rRNA from tricistronic rRNA transcript (SSU-rRNA, 5.8S rRNA, LSU-rRNA)"/>
    <property type="evidence" value="ECO:0007669"/>
    <property type="project" value="UniProtKB-UniRule"/>
</dbReference>
<dbReference type="GO" id="GO:0000463">
    <property type="term" value="P:maturation of LSU-rRNA from tricistronic rRNA transcript (SSU-rRNA, 5.8S rRNA, LSU-rRNA)"/>
    <property type="evidence" value="ECO:0007669"/>
    <property type="project" value="UniProtKB-UniRule"/>
</dbReference>
<dbReference type="GO" id="GO:0000462">
    <property type="term" value="P:maturation of SSU-rRNA from tricistronic rRNA transcript (SSU-rRNA, 5.8S rRNA, LSU-rRNA)"/>
    <property type="evidence" value="ECO:0007669"/>
    <property type="project" value="EnsemblFungi"/>
</dbReference>
<dbReference type="CDD" id="cd17709">
    <property type="entry name" value="BRCT_pescadillo_like"/>
    <property type="match status" value="1"/>
</dbReference>
<dbReference type="FunFam" id="3.40.50.10190:FF:000067">
    <property type="entry name" value="Pescadillo homolog"/>
    <property type="match status" value="1"/>
</dbReference>
<dbReference type="Gene3D" id="3.40.50.10190">
    <property type="entry name" value="BRCT domain"/>
    <property type="match status" value="1"/>
</dbReference>
<dbReference type="HAMAP" id="MF_03028">
    <property type="entry name" value="Pescadillo"/>
    <property type="match status" value="1"/>
</dbReference>
<dbReference type="InterPro" id="IPR001357">
    <property type="entry name" value="BRCT_dom"/>
</dbReference>
<dbReference type="InterPro" id="IPR036420">
    <property type="entry name" value="BRCT_dom_sf"/>
</dbReference>
<dbReference type="InterPro" id="IPR010613">
    <property type="entry name" value="PES"/>
</dbReference>
<dbReference type="PANTHER" id="PTHR12221">
    <property type="entry name" value="PESCADILLO - RELATED"/>
    <property type="match status" value="1"/>
</dbReference>
<dbReference type="PANTHER" id="PTHR12221:SF6">
    <property type="entry name" value="PESCADILLO HOMOLOG"/>
    <property type="match status" value="1"/>
</dbReference>
<dbReference type="Pfam" id="PF16589">
    <property type="entry name" value="BRCT_2"/>
    <property type="match status" value="1"/>
</dbReference>
<dbReference type="Pfam" id="PF06732">
    <property type="entry name" value="Pescadillo_N"/>
    <property type="match status" value="1"/>
</dbReference>
<dbReference type="SMART" id="SM00292">
    <property type="entry name" value="BRCT"/>
    <property type="match status" value="1"/>
</dbReference>
<dbReference type="SUPFAM" id="SSF52113">
    <property type="entry name" value="BRCT domain"/>
    <property type="match status" value="1"/>
</dbReference>
<dbReference type="PROSITE" id="PS50172">
    <property type="entry name" value="BRCT"/>
    <property type="match status" value="1"/>
</dbReference>